<protein>
    <recommendedName>
        <fullName evidence="1">tRNA uridine 5-carboxymethylaminomethyl modification enzyme MnmG</fullName>
    </recommendedName>
    <alternativeName>
        <fullName evidence="1">Glucose-inhibited division protein A</fullName>
    </alternativeName>
</protein>
<evidence type="ECO:0000255" key="1">
    <source>
        <dbReference type="HAMAP-Rule" id="MF_00129"/>
    </source>
</evidence>
<gene>
    <name evidence="1" type="primary">mnmG</name>
    <name evidence="1" type="synonym">gidA</name>
    <name type="ordered locus">Bcer98_4023</name>
</gene>
<name>MNMG_BACCN</name>
<reference key="1">
    <citation type="journal article" date="2008" name="Chem. Biol. Interact.">
        <title>Extending the Bacillus cereus group genomics to putative food-borne pathogens of different toxicity.</title>
        <authorList>
            <person name="Lapidus A."/>
            <person name="Goltsman E."/>
            <person name="Auger S."/>
            <person name="Galleron N."/>
            <person name="Segurens B."/>
            <person name="Dossat C."/>
            <person name="Land M.L."/>
            <person name="Broussolle V."/>
            <person name="Brillard J."/>
            <person name="Guinebretiere M.-H."/>
            <person name="Sanchis V."/>
            <person name="Nguen-the C."/>
            <person name="Lereclus D."/>
            <person name="Richardson P."/>
            <person name="Wincker P."/>
            <person name="Weissenbach J."/>
            <person name="Ehrlich S.D."/>
            <person name="Sorokin A."/>
        </authorList>
    </citation>
    <scope>NUCLEOTIDE SEQUENCE [LARGE SCALE GENOMIC DNA]</scope>
    <source>
        <strain>DSM 22905 / CIP 110041 / 391-98 / NVH 391-98</strain>
    </source>
</reference>
<dbReference type="EMBL" id="CP000764">
    <property type="protein sequence ID" value="ABS24204.1"/>
    <property type="molecule type" value="Genomic_DNA"/>
</dbReference>
<dbReference type="RefSeq" id="WP_012096468.1">
    <property type="nucleotide sequence ID" value="NC_009674.1"/>
</dbReference>
<dbReference type="SMR" id="A7GVP6"/>
<dbReference type="STRING" id="315749.Bcer98_4023"/>
<dbReference type="GeneID" id="33899253"/>
<dbReference type="KEGG" id="bcy:Bcer98_4023"/>
<dbReference type="eggNOG" id="COG0445">
    <property type="taxonomic scope" value="Bacteria"/>
</dbReference>
<dbReference type="HOGENOM" id="CLU_007831_2_2_9"/>
<dbReference type="OrthoDB" id="9815560at2"/>
<dbReference type="Proteomes" id="UP000002300">
    <property type="component" value="Chromosome"/>
</dbReference>
<dbReference type="GO" id="GO:0005829">
    <property type="term" value="C:cytosol"/>
    <property type="evidence" value="ECO:0007669"/>
    <property type="project" value="TreeGrafter"/>
</dbReference>
<dbReference type="GO" id="GO:0050660">
    <property type="term" value="F:flavin adenine dinucleotide binding"/>
    <property type="evidence" value="ECO:0007669"/>
    <property type="project" value="UniProtKB-UniRule"/>
</dbReference>
<dbReference type="GO" id="GO:0030488">
    <property type="term" value="P:tRNA methylation"/>
    <property type="evidence" value="ECO:0007669"/>
    <property type="project" value="TreeGrafter"/>
</dbReference>
<dbReference type="GO" id="GO:0002098">
    <property type="term" value="P:tRNA wobble uridine modification"/>
    <property type="evidence" value="ECO:0007669"/>
    <property type="project" value="InterPro"/>
</dbReference>
<dbReference type="FunFam" id="1.10.10.1800:FF:000001">
    <property type="entry name" value="tRNA uridine 5-carboxymethylaminomethyl modification enzyme MnmG"/>
    <property type="match status" value="1"/>
</dbReference>
<dbReference type="FunFam" id="1.10.150.570:FF:000001">
    <property type="entry name" value="tRNA uridine 5-carboxymethylaminomethyl modification enzyme MnmG"/>
    <property type="match status" value="1"/>
</dbReference>
<dbReference type="FunFam" id="3.50.50.60:FF:000002">
    <property type="entry name" value="tRNA uridine 5-carboxymethylaminomethyl modification enzyme MnmG"/>
    <property type="match status" value="1"/>
</dbReference>
<dbReference type="FunFam" id="3.50.50.60:FF:000063">
    <property type="entry name" value="tRNA uridine 5-carboxymethylaminomethyl modification enzyme MnmG"/>
    <property type="match status" value="1"/>
</dbReference>
<dbReference type="Gene3D" id="3.50.50.60">
    <property type="entry name" value="FAD/NAD(P)-binding domain"/>
    <property type="match status" value="2"/>
</dbReference>
<dbReference type="Gene3D" id="1.10.150.570">
    <property type="entry name" value="GidA associated domain, C-terminal subdomain"/>
    <property type="match status" value="1"/>
</dbReference>
<dbReference type="Gene3D" id="1.10.10.1800">
    <property type="entry name" value="tRNA uridine 5-carboxymethylaminomethyl modification enzyme MnmG/GidA"/>
    <property type="match status" value="1"/>
</dbReference>
<dbReference type="HAMAP" id="MF_00129">
    <property type="entry name" value="MnmG_GidA"/>
    <property type="match status" value="1"/>
</dbReference>
<dbReference type="InterPro" id="IPR036188">
    <property type="entry name" value="FAD/NAD-bd_sf"/>
</dbReference>
<dbReference type="InterPro" id="IPR049312">
    <property type="entry name" value="GIDA_C_N"/>
</dbReference>
<dbReference type="InterPro" id="IPR004416">
    <property type="entry name" value="MnmG"/>
</dbReference>
<dbReference type="InterPro" id="IPR002218">
    <property type="entry name" value="MnmG-rel"/>
</dbReference>
<dbReference type="InterPro" id="IPR020595">
    <property type="entry name" value="MnmG-rel_CS"/>
</dbReference>
<dbReference type="InterPro" id="IPR026904">
    <property type="entry name" value="MnmG_C"/>
</dbReference>
<dbReference type="InterPro" id="IPR047001">
    <property type="entry name" value="MnmG_C_subdom"/>
</dbReference>
<dbReference type="InterPro" id="IPR044920">
    <property type="entry name" value="MnmG_C_subdom_sf"/>
</dbReference>
<dbReference type="InterPro" id="IPR040131">
    <property type="entry name" value="MnmG_N"/>
</dbReference>
<dbReference type="NCBIfam" id="TIGR00136">
    <property type="entry name" value="mnmG_gidA"/>
    <property type="match status" value="1"/>
</dbReference>
<dbReference type="PANTHER" id="PTHR11806">
    <property type="entry name" value="GLUCOSE INHIBITED DIVISION PROTEIN A"/>
    <property type="match status" value="1"/>
</dbReference>
<dbReference type="PANTHER" id="PTHR11806:SF0">
    <property type="entry name" value="PROTEIN MTO1 HOMOLOG, MITOCHONDRIAL"/>
    <property type="match status" value="1"/>
</dbReference>
<dbReference type="Pfam" id="PF01134">
    <property type="entry name" value="GIDA"/>
    <property type="match status" value="1"/>
</dbReference>
<dbReference type="Pfam" id="PF21680">
    <property type="entry name" value="GIDA_C_1st"/>
    <property type="match status" value="1"/>
</dbReference>
<dbReference type="Pfam" id="PF13932">
    <property type="entry name" value="SAM_GIDA_C"/>
    <property type="match status" value="1"/>
</dbReference>
<dbReference type="PRINTS" id="PR00411">
    <property type="entry name" value="PNDRDTASEI"/>
</dbReference>
<dbReference type="SMART" id="SM01228">
    <property type="entry name" value="GIDA_assoc_3"/>
    <property type="match status" value="1"/>
</dbReference>
<dbReference type="SUPFAM" id="SSF51905">
    <property type="entry name" value="FAD/NAD(P)-binding domain"/>
    <property type="match status" value="1"/>
</dbReference>
<dbReference type="PROSITE" id="PS01280">
    <property type="entry name" value="GIDA_1"/>
    <property type="match status" value="1"/>
</dbReference>
<dbReference type="PROSITE" id="PS01281">
    <property type="entry name" value="GIDA_2"/>
    <property type="match status" value="1"/>
</dbReference>
<proteinExistence type="inferred from homology"/>
<accession>A7GVP6</accession>
<keyword id="KW-0963">Cytoplasm</keyword>
<keyword id="KW-0274">FAD</keyword>
<keyword id="KW-0285">Flavoprotein</keyword>
<keyword id="KW-0520">NAD</keyword>
<keyword id="KW-0819">tRNA processing</keyword>
<organism>
    <name type="scientific">Bacillus cytotoxicus (strain DSM 22905 / CIP 110041 / 391-98 / NVH 391-98)</name>
    <dbReference type="NCBI Taxonomy" id="315749"/>
    <lineage>
        <taxon>Bacteria</taxon>
        <taxon>Bacillati</taxon>
        <taxon>Bacillota</taxon>
        <taxon>Bacilli</taxon>
        <taxon>Bacillales</taxon>
        <taxon>Bacillaceae</taxon>
        <taxon>Bacillus</taxon>
        <taxon>Bacillus cereus group</taxon>
    </lineage>
</organism>
<feature type="chain" id="PRO_1000076307" description="tRNA uridine 5-carboxymethylaminomethyl modification enzyme MnmG">
    <location>
        <begin position="1"/>
        <end position="629"/>
    </location>
</feature>
<feature type="binding site" evidence="1">
    <location>
        <begin position="14"/>
        <end position="19"/>
    </location>
    <ligand>
        <name>FAD</name>
        <dbReference type="ChEBI" id="CHEBI:57692"/>
    </ligand>
</feature>
<feature type="binding site" evidence="1">
    <location>
        <position position="126"/>
    </location>
    <ligand>
        <name>FAD</name>
        <dbReference type="ChEBI" id="CHEBI:57692"/>
    </ligand>
</feature>
<feature type="binding site" evidence="1">
    <location>
        <position position="181"/>
    </location>
    <ligand>
        <name>FAD</name>
        <dbReference type="ChEBI" id="CHEBI:57692"/>
    </ligand>
</feature>
<feature type="binding site" evidence="1">
    <location>
        <begin position="273"/>
        <end position="287"/>
    </location>
    <ligand>
        <name>NAD(+)</name>
        <dbReference type="ChEBI" id="CHEBI:57540"/>
    </ligand>
</feature>
<feature type="binding site" evidence="1">
    <location>
        <position position="370"/>
    </location>
    <ligand>
        <name>FAD</name>
        <dbReference type="ChEBI" id="CHEBI:57692"/>
    </ligand>
</feature>
<comment type="function">
    <text evidence="1">NAD-binding protein involved in the addition of a carboxymethylaminomethyl (cmnm) group at the wobble position (U34) of certain tRNAs, forming tRNA-cmnm(5)s(2)U34.</text>
</comment>
<comment type="cofactor">
    <cofactor evidence="1">
        <name>FAD</name>
        <dbReference type="ChEBI" id="CHEBI:57692"/>
    </cofactor>
</comment>
<comment type="subunit">
    <text evidence="1">Homodimer. Heterotetramer of two MnmE and two MnmG subunits.</text>
</comment>
<comment type="subcellular location">
    <subcellularLocation>
        <location evidence="1">Cytoplasm</location>
    </subcellularLocation>
</comment>
<comment type="similarity">
    <text evidence="1">Belongs to the MnmG family.</text>
</comment>
<sequence length="629" mass="70177">MGYNAGSYDVIVIGAGHAGCEAGLAAARMGSKTLMLTINLDMVAFMPCNPSVGGPAKGIVVREIDALGGEMGRNIDKTHIQMRMLNTGKGPAVRALRAQADKFLYQHELKKTIEETPNLTLRQGMVERLIVEDGVCKGVITQSGAEYTAKTVVITTGTFLRGEIIMGDLKYSSGPNNQQPSITLSEHLEELGFELVRFKTGTPPRVNSNTIDYSKTEIQPGDDQPRAFSFETTKFILDQIPCWLTYTSEETHRLIDKNLHRSAMYSGMIKGTGPRYCPSIEDKVVRFNDKPRHQIFLEPEGRNTQEVYVQGLSTSLPEDVQREMLKTIPGLENVEMMRTGYAIEYDAIVPTQLWPTLETKKIKNLYTAGQINGTSGYEEAAGQGIMAGINAACRSLGKKEVILGRSDAYIGVLIDDLVTKGTNEPYRLLTSRAEYRLLLRHDNADLRLTEIGHEIGLIPEERYERYSQKKEQIEQEKARLEGIIIKPRPEVQELIRSVGGSELKDGIRASDLLRRPEMTYEHIRLLAPSELEINDEVAEQVEIQIKYEGYIEKSLQQVERMKKMESKKIPVDIDYDAISGIASEARQKLKEVRPLSVGQASRISGVNPADISILLVYIEQGKIARVSNQ</sequence>